<keyword id="KW-0002">3D-structure</keyword>
<keyword id="KW-0007">Acetylation</keyword>
<keyword id="KW-0025">Alternative splicing</keyword>
<keyword id="KW-0131">Cell cycle</keyword>
<keyword id="KW-0132">Cell division</keyword>
<keyword id="KW-0137">Centromere</keyword>
<keyword id="KW-0158">Chromosome</keyword>
<keyword id="KW-0175">Coiled coil</keyword>
<keyword id="KW-0963">Cytoplasm</keyword>
<keyword id="KW-0206">Cytoskeleton</keyword>
<keyword id="KW-0995">Kinetochore</keyword>
<keyword id="KW-0493">Microtubule</keyword>
<keyword id="KW-0498">Mitosis</keyword>
<keyword id="KW-0597">Phosphoprotein</keyword>
<keyword id="KW-1267">Proteomics identification</keyword>
<keyword id="KW-1185">Reference proteome</keyword>
<name>SKA1_HUMAN</name>
<proteinExistence type="evidence at protein level"/>
<comment type="function">
    <text evidence="1 6 7 10 11 12 13 14 15 17 18 20 21 23 24 25 27">Component of the SKA complex, a microtubule plus end-binding complex of the outer kinetochore that stabilizes spindle microtubule-kinetochore attachments, promotes alignment of chromosomes at the mitotic spindle equator (chromosome congression) and assists suppression of the spindle assembly checkpoint (PubMed:17093495, PubMed:19289083, PubMed:22371557, PubMed:22483620, PubMed:23085020, PubMed:26981768, PubMed:27697923, PubMed:29487209, PubMed:31804178). Kinetochores, consisting of a centromere-associated inner segment and a microtubule-contacting outer segment, play a crucial role in chromosome segregation by mediating the physical connection between centromeric DNA and spindle microtubules (PubMed:19289083, PubMed:22483620, PubMed:23085020, PubMed:28479321, PubMed:29487209). The outer kinetochore is made up of the ten-subunit KMN network complex, comprising the MIS12, NDC80 and KNL1 complexes, and auxiliary microtubule-associated components such as the SKA complex; together they connect the outer kinetochore with the inner kinetochore, bind microtubules, and mediate interactions with mitotic checkpoint proteins that delay anaphase until chromosomes are bioriented on the spindle (PubMed:17093495, PubMed:19289083, PubMed:23085020, PubMed:28479321, PubMed:29487209). The SKA complex is loaded onto bioriented kinetochores and it facilitates chromosome congression by stabilizing microtubules together with MAPRE1, and end-on attachment of the NDC80 complex to depolymerizing spindle microtubules, thereby assisting the poleward-moving kinetochore in withstanding microtubule pulling forces (PubMed:19289083, PubMed:22371557, PubMed:22454517, PubMed:23085020, PubMed:24413531, PubMed:27697923, PubMed:28479321, PubMed:28495837, PubMed:29487209). The complex associates with dynamic microtubule plus-ends and can track both depolymerizing and elongating microtubules (PubMed:23085020, PubMed:29153323). The complex recruits protein phosphatase 1 (PP1) to the kinetochore in prometaphase and metaphase, to oppose spindle assembly checkpoint signaling and promote the onset of anaphase (PubMed:26981768). In the complex, it mediates interactions with microtubules (PubMed:19289083, PubMed:22483620, PubMed:23085020, PubMed:24413531, PubMed:27667719, PubMed:29153323, PubMed:36592928). It also stimulates AURKB/Aurora B catalytic activity (PubMed:27697923). During meiosis the SKA complex stabilizes the meiotic spindle and is required for its migration to the cortex (By similarity).</text>
</comment>
<comment type="subunit">
    <text evidence="6 7 8 10 11 12 13 15 16 19 22 24 25 26 27">Component of the SKA complex, composed of SKA1, SKA2 and SKA3 (PubMed:17093495, PubMed:19289083, PubMed:19387489, PubMed:22483620, PubMed:23085020, PubMed:28441529, PubMed:28535377, PubMed:29487209, PubMed:31804178, PubMed:32491969). The SKA complex is a homodimer organized around a central W-shaped coiled-coil structure, formed by the interacting domains of SKA1, SKA2, and SKA3, each end of the 'W' is extended further by the C-terminal microtubule-binding domains of SKA1 and SKA3; the complex forms extended structures on microtubules (PubMed:17093495, PubMed:19289083, PubMed:22483620, PubMed:23085020, PubMed:27225956, PubMed:28441529, PubMed:29487209, PubMed:31804178). Interacts (via SXLP motif) with MAPRE1 (via C-terminus); the interaction is direct and stabilizes the kinetochore-microtubule attachment of the SKA1 complex (PubMed:27225956, PubMed:36592928). Interacts (via C-terminus) with protein phosphatase PP1 subunit PPP1CA; the interaction is direct and required for recruitment of PPP1CA to the kinetochore (PubMed:26981768). Interacts with the NDC80 complex; the interaction is required to establish kinetochore-microtubule end-on attachments (PubMed:22371557, PubMed:22454517, PubMed:27225956, PubMed:28535377, PubMed:32491969).</text>
</comment>
<comment type="interaction">
    <interactant intactId="EBI-741854">
        <id>Q96BD8</id>
    </interactant>
    <interactant intactId="EBI-465781">
        <id>Q9UL45</id>
        <label>BLOC1S6</label>
    </interactant>
    <organismsDiffer>false</organismsDiffer>
    <experiments>9</experiments>
</comment>
<comment type="interaction">
    <interactant intactId="EBI-741854">
        <id>Q96BD8</id>
    </interactant>
    <interactant intactId="EBI-10181422">
        <id>A0A1B0GWI1</id>
        <label>CCDC196</label>
    </interactant>
    <organismsDiffer>false</organismsDiffer>
    <experiments>3</experiments>
</comment>
<comment type="interaction">
    <interactant intactId="EBI-741854">
        <id>Q96BD8</id>
    </interactant>
    <interactant intactId="EBI-2870039">
        <id>Q8IZT9</id>
        <label>FAM9C</label>
    </interactant>
    <organismsDiffer>false</organismsDiffer>
    <experiments>4</experiments>
</comment>
<comment type="interaction">
    <interactant intactId="EBI-741854">
        <id>Q96BD8</id>
    </interactant>
    <interactant intactId="EBI-357745">
        <id>P62195</id>
        <label>PSMC5</label>
    </interactant>
    <organismsDiffer>false</organismsDiffer>
    <experiments>8</experiments>
</comment>
<comment type="interaction">
    <interactant intactId="EBI-741854">
        <id>Q96BD8</id>
    </interactant>
    <interactant intactId="EBI-1773994">
        <id>Q8WVK7</id>
        <label>SKA2</label>
    </interactant>
    <organismsDiffer>false</organismsDiffer>
    <experiments>14</experiments>
</comment>
<comment type="interaction">
    <interactant intactId="EBI-741854">
        <id>Q96BD8</id>
    </interactant>
    <interactant intactId="EBI-1773976">
        <id>Q8IX90</id>
        <label>SKA3</label>
    </interactant>
    <organismsDiffer>false</organismsDiffer>
    <experiments>13</experiments>
</comment>
<comment type="interaction">
    <interactant intactId="EBI-741854">
        <id>Q96BD8</id>
    </interactant>
    <interactant intactId="EBI-296723">
        <id>O95295</id>
        <label>SNAPIN</label>
    </interactant>
    <organismsDiffer>false</organismsDiffer>
    <experiments>5</experiments>
</comment>
<comment type="interaction">
    <interactant intactId="EBI-741854">
        <id>Q96BD8</id>
    </interactant>
    <interactant intactId="EBI-10172867">
        <id>A1L4H1</id>
        <label>SSC5D</label>
    </interactant>
    <organismsDiffer>false</organismsDiffer>
    <experiments>3</experiments>
</comment>
<comment type="interaction">
    <interactant intactId="EBI-741854">
        <id>Q96BD8</id>
    </interactant>
    <interactant intactId="EBI-6872807">
        <id>Q8N0S2</id>
        <label>SYCE1</label>
    </interactant>
    <organismsDiffer>false</organismsDiffer>
    <experiments>3</experiments>
</comment>
<comment type="subcellular location">
    <subcellularLocation>
        <location evidence="5 14 15 16 30">Cytoplasm</location>
        <location evidence="5 14 15 16 30">Cytoskeleton</location>
        <location evidence="5 14 15 16 30">Spindle</location>
    </subcellularLocation>
    <subcellularLocation>
        <location evidence="6 12 14 15 20">Chromosome</location>
        <location evidence="6 12 14 15 20">Centromere</location>
        <location evidence="6 12 14 15 20">Kinetochore</location>
    </subcellularLocation>
    <subcellularLocation>
        <location evidence="9">Cytoplasm</location>
        <location evidence="9">Cytoskeleton</location>
        <location evidence="9">Microtubule organizing center</location>
        <location evidence="9">Centrosome</location>
    </subcellularLocation>
    <text evidence="1 6 9 10 16 18 20 24">Localizes to bioriented kinetochores and spindle microtubules during metaphase in a NDC80 complex-dependent manner (PubMed:17093495, PubMed:28479321, PubMed:29487209). The SKA complex begins to concentrate at kinetochores before microtubule attachment but reaches maximum levels on bioriented metaphase chromosomes (PubMed:17093495). Localizes both to microtubule plus-ends and along the length of microtubules (PubMed:27225956). The localization of the SKA complex to kinetochores is positively regulated by protein serine/threonine kinase CDK1 (PubMed:28479321). The localization of the SKA complex to kinetochores is negatively regulated by protein serine/threonine kinase AURKB, and this action is opposed directly or indirectly by the PP1 and PP2A protein phosphatase complexes (PubMed:22371557, PubMed:27697923). Localizes at the centrosome during interphase and prophase (PubMed:19646878). Localizes to the meiotic spindle, but not to kinetochores, from the stage of germinal vesicle breakdown (GVBD) to meiosis II (MII) (By similarity).</text>
</comment>
<comment type="alternative products">
    <event type="alternative splicing"/>
    <isoform>
        <id>Q96BD8-1</id>
        <name>1</name>
        <sequence type="displayed"/>
    </isoform>
    <isoform>
        <id>Q96BD8-2</id>
        <name>2</name>
        <sequence type="described" ref="VSP_037250"/>
    </isoform>
</comment>
<comment type="PTM">
    <text evidence="10">Phosphorylated by AURKB at Thr-157 and Ser-242 which negatively regulates the association of the SKA complex with kinetochores to allow correction of aberrant kinetochore-microtubule interactions and promote mitotic sister chromatid biorientation.</text>
</comment>
<comment type="similarity">
    <text evidence="29">Belongs to the SKA1 family.</text>
</comment>
<organism>
    <name type="scientific">Homo sapiens</name>
    <name type="common">Human</name>
    <dbReference type="NCBI Taxonomy" id="9606"/>
    <lineage>
        <taxon>Eukaryota</taxon>
        <taxon>Metazoa</taxon>
        <taxon>Chordata</taxon>
        <taxon>Craniata</taxon>
        <taxon>Vertebrata</taxon>
        <taxon>Euteleostomi</taxon>
        <taxon>Mammalia</taxon>
        <taxon>Eutheria</taxon>
        <taxon>Euarchontoglires</taxon>
        <taxon>Primates</taxon>
        <taxon>Haplorrhini</taxon>
        <taxon>Catarrhini</taxon>
        <taxon>Hominidae</taxon>
        <taxon>Homo</taxon>
    </lineage>
</organism>
<gene>
    <name type="primary">SKA1</name>
    <name type="synonym">C18orf24</name>
</gene>
<evidence type="ECO:0000250" key="1">
    <source>
        <dbReference type="UniProtKB" id="Q9CPV1"/>
    </source>
</evidence>
<evidence type="ECO:0000255" key="2"/>
<evidence type="ECO:0000256" key="3">
    <source>
        <dbReference type="SAM" id="MobiDB-lite"/>
    </source>
</evidence>
<evidence type="ECO:0000269" key="4">
    <source>
    </source>
</evidence>
<evidence type="ECO:0000269" key="5">
    <source>
    </source>
</evidence>
<evidence type="ECO:0000269" key="6">
    <source>
    </source>
</evidence>
<evidence type="ECO:0000269" key="7">
    <source>
    </source>
</evidence>
<evidence type="ECO:0000269" key="8">
    <source>
    </source>
</evidence>
<evidence type="ECO:0000269" key="9">
    <source>
    </source>
</evidence>
<evidence type="ECO:0000269" key="10">
    <source>
    </source>
</evidence>
<evidence type="ECO:0000269" key="11">
    <source>
    </source>
</evidence>
<evidence type="ECO:0000269" key="12">
    <source>
    </source>
</evidence>
<evidence type="ECO:0000269" key="13">
    <source>
    </source>
</evidence>
<evidence type="ECO:0000269" key="14">
    <source>
    </source>
</evidence>
<evidence type="ECO:0000269" key="15">
    <source>
    </source>
</evidence>
<evidence type="ECO:0000269" key="16">
    <source>
    </source>
</evidence>
<evidence type="ECO:0000269" key="17">
    <source>
    </source>
</evidence>
<evidence type="ECO:0000269" key="18">
    <source>
    </source>
</evidence>
<evidence type="ECO:0000269" key="19">
    <source>
    </source>
</evidence>
<evidence type="ECO:0000269" key="20">
    <source>
    </source>
</evidence>
<evidence type="ECO:0000269" key="21">
    <source>
    </source>
</evidence>
<evidence type="ECO:0000269" key="22">
    <source>
    </source>
</evidence>
<evidence type="ECO:0000269" key="23">
    <source>
    </source>
</evidence>
<evidence type="ECO:0000269" key="24">
    <source>
    </source>
</evidence>
<evidence type="ECO:0000269" key="25">
    <source>
    </source>
</evidence>
<evidence type="ECO:0000269" key="26">
    <source>
    </source>
</evidence>
<evidence type="ECO:0000269" key="27">
    <source>
    </source>
</evidence>
<evidence type="ECO:0000303" key="28">
    <source>
    </source>
</evidence>
<evidence type="ECO:0000305" key="29"/>
<evidence type="ECO:0000305" key="30">
    <source>
    </source>
</evidence>
<evidence type="ECO:0007744" key="31">
    <source>
        <dbReference type="PDB" id="4AJ5"/>
    </source>
</evidence>
<evidence type="ECO:0007744" key="32">
    <source>
        <dbReference type="PDB" id="4C9Y"/>
    </source>
</evidence>
<evidence type="ECO:0007744" key="33">
    <source>
        <dbReference type="PDB" id="4CA0"/>
    </source>
</evidence>
<evidence type="ECO:0007744" key="34">
    <source>
    </source>
</evidence>
<evidence type="ECO:0007829" key="35">
    <source>
        <dbReference type="PDB" id="4AJ5"/>
    </source>
</evidence>
<evidence type="ECO:0007829" key="36">
    <source>
        <dbReference type="PDB" id="4C9Y"/>
    </source>
</evidence>
<evidence type="ECO:0007829" key="37">
    <source>
        <dbReference type="PDB" id="4CA0"/>
    </source>
</evidence>
<dbReference type="EMBL" id="AK303464">
    <property type="protein sequence ID" value="BAG64506.1"/>
    <property type="molecule type" value="mRNA"/>
</dbReference>
<dbReference type="EMBL" id="AK313968">
    <property type="protein sequence ID" value="BAG36683.1"/>
    <property type="molecule type" value="mRNA"/>
</dbReference>
<dbReference type="EMBL" id="CH471096">
    <property type="protein sequence ID" value="EAW62971.1"/>
    <property type="molecule type" value="Genomic_DNA"/>
</dbReference>
<dbReference type="EMBL" id="BC015706">
    <property type="protein sequence ID" value="AAH15706.1"/>
    <property type="molecule type" value="mRNA"/>
</dbReference>
<dbReference type="CCDS" id="CCDS11946.1">
    <molecule id="Q96BD8-1"/>
</dbReference>
<dbReference type="RefSeq" id="NP_001034624.1">
    <molecule id="Q96BD8-1"/>
    <property type="nucleotide sequence ID" value="NM_001039535.3"/>
</dbReference>
<dbReference type="RefSeq" id="NP_659497.1">
    <molecule id="Q96BD8-1"/>
    <property type="nucleotide sequence ID" value="NM_145060.4"/>
</dbReference>
<dbReference type="PDB" id="4AJ5">
    <property type="method" value="X-ray"/>
    <property type="resolution" value="3.32 A"/>
    <property type="chains" value="A/B/C/D/E/F/G/H/I/J=1-91"/>
</dbReference>
<dbReference type="PDB" id="4C9Y">
    <property type="method" value="X-ray"/>
    <property type="resolution" value="2.01 A"/>
    <property type="chains" value="A/B=133-255"/>
</dbReference>
<dbReference type="PDB" id="4CA0">
    <property type="method" value="X-ray"/>
    <property type="resolution" value="2.26 A"/>
    <property type="chains" value="A/B=133-255"/>
</dbReference>
<dbReference type="PDBsum" id="4AJ5"/>
<dbReference type="PDBsum" id="4C9Y"/>
<dbReference type="PDBsum" id="4CA0"/>
<dbReference type="SMR" id="Q96BD8"/>
<dbReference type="BioGRID" id="128632">
    <property type="interactions" value="78"/>
</dbReference>
<dbReference type="ComplexPortal" id="CPX-5642">
    <property type="entry name" value="Kinetochore SKA complex"/>
</dbReference>
<dbReference type="FunCoup" id="Q96BD8">
    <property type="interactions" value="403"/>
</dbReference>
<dbReference type="IntAct" id="Q96BD8">
    <property type="interactions" value="56"/>
</dbReference>
<dbReference type="MINT" id="Q96BD8"/>
<dbReference type="STRING" id="9606.ENSP00000285116"/>
<dbReference type="iPTMnet" id="Q96BD8"/>
<dbReference type="PhosphoSitePlus" id="Q96BD8"/>
<dbReference type="SwissPalm" id="Q96BD8"/>
<dbReference type="BioMuta" id="SKA1"/>
<dbReference type="DMDM" id="74731226"/>
<dbReference type="jPOST" id="Q96BD8"/>
<dbReference type="MassIVE" id="Q96BD8"/>
<dbReference type="PaxDb" id="9606-ENSP00000285116"/>
<dbReference type="PeptideAtlas" id="Q96BD8"/>
<dbReference type="ProteomicsDB" id="76069">
    <molecule id="Q96BD8-1"/>
</dbReference>
<dbReference type="ProteomicsDB" id="76070">
    <molecule id="Q96BD8-2"/>
</dbReference>
<dbReference type="Pumba" id="Q96BD8"/>
<dbReference type="Antibodypedia" id="22703">
    <property type="antibodies" value="92 antibodies from 22 providers"/>
</dbReference>
<dbReference type="DNASU" id="220134"/>
<dbReference type="Ensembl" id="ENST00000285116.8">
    <molecule id="Q96BD8-1"/>
    <property type="protein sequence ID" value="ENSP00000285116.3"/>
    <property type="gene ID" value="ENSG00000154839.10"/>
</dbReference>
<dbReference type="Ensembl" id="ENST00000398452.6">
    <molecule id="Q96BD8-1"/>
    <property type="protein sequence ID" value="ENSP00000381470.1"/>
    <property type="gene ID" value="ENSG00000154839.10"/>
</dbReference>
<dbReference type="Ensembl" id="ENST00000417656.6">
    <molecule id="Q96BD8-2"/>
    <property type="protein sequence ID" value="ENSP00000397222.1"/>
    <property type="gene ID" value="ENSG00000154839.10"/>
</dbReference>
<dbReference type="Ensembl" id="ENST00000571751.5">
    <molecule id="Q96BD8-1"/>
    <property type="protein sequence ID" value="ENSP00000458992.1"/>
    <property type="gene ID" value="ENSG00000262634.5"/>
</dbReference>
<dbReference type="Ensembl" id="ENST00000616604.2">
    <molecule id="Q96BD8-1"/>
    <property type="protein sequence ID" value="ENSP00000478259.1"/>
    <property type="gene ID" value="ENSG00000262634.5"/>
</dbReference>
<dbReference type="Ensembl" id="ENST00000633940.1">
    <molecule id="Q96BD8-2"/>
    <property type="protein sequence ID" value="ENSP00000488815.1"/>
    <property type="gene ID" value="ENSG00000262634.5"/>
</dbReference>
<dbReference type="GeneID" id="220134"/>
<dbReference type="KEGG" id="hsa:220134"/>
<dbReference type="MANE-Select" id="ENST00000285116.8">
    <property type="protein sequence ID" value="ENSP00000285116.3"/>
    <property type="RefSeq nucleotide sequence ID" value="NM_145060.4"/>
    <property type="RefSeq protein sequence ID" value="NP_659497.1"/>
</dbReference>
<dbReference type="UCSC" id="uc002let.4">
    <molecule id="Q96BD8-1"/>
    <property type="organism name" value="human"/>
</dbReference>
<dbReference type="AGR" id="HGNC:28109"/>
<dbReference type="CTD" id="220134"/>
<dbReference type="DisGeNET" id="220134"/>
<dbReference type="GeneCards" id="SKA1"/>
<dbReference type="HGNC" id="HGNC:28109">
    <property type="gene designation" value="SKA1"/>
</dbReference>
<dbReference type="HPA" id="ENSG00000154839">
    <property type="expression patterns" value="Tissue enhanced (bone marrow, lymphoid tissue)"/>
</dbReference>
<dbReference type="MIM" id="616673">
    <property type="type" value="gene"/>
</dbReference>
<dbReference type="neXtProt" id="NX_Q96BD8"/>
<dbReference type="OpenTargets" id="ENSG00000154839"/>
<dbReference type="PharmGKB" id="PA165429102"/>
<dbReference type="VEuPathDB" id="HostDB:ENSG00000154839"/>
<dbReference type="eggNOG" id="KOG4832">
    <property type="taxonomic scope" value="Eukaryota"/>
</dbReference>
<dbReference type="GeneTree" id="ENSGT00390000011654"/>
<dbReference type="HOGENOM" id="CLU_096842_0_0_1"/>
<dbReference type="InParanoid" id="Q96BD8"/>
<dbReference type="OMA" id="PTGMRED"/>
<dbReference type="OrthoDB" id="5962at2759"/>
<dbReference type="PAN-GO" id="Q96BD8">
    <property type="GO annotations" value="8 GO annotations based on evolutionary models"/>
</dbReference>
<dbReference type="PhylomeDB" id="Q96BD8"/>
<dbReference type="TreeFam" id="TF324442"/>
<dbReference type="PathwayCommons" id="Q96BD8"/>
<dbReference type="Reactome" id="R-HSA-141444">
    <property type="pathway name" value="Amplification of signal from unattached kinetochores via a MAD2 inhibitory signal"/>
</dbReference>
<dbReference type="Reactome" id="R-HSA-2467813">
    <property type="pathway name" value="Separation of Sister Chromatids"/>
</dbReference>
<dbReference type="Reactome" id="R-HSA-2500257">
    <property type="pathway name" value="Resolution of Sister Chromatid Cohesion"/>
</dbReference>
<dbReference type="Reactome" id="R-HSA-5663220">
    <property type="pathway name" value="RHO GTPases Activate Formins"/>
</dbReference>
<dbReference type="Reactome" id="R-HSA-68877">
    <property type="pathway name" value="Mitotic Prometaphase"/>
</dbReference>
<dbReference type="Reactome" id="R-HSA-9648025">
    <property type="pathway name" value="EML4 and NUDC in mitotic spindle formation"/>
</dbReference>
<dbReference type="SignaLink" id="Q96BD8"/>
<dbReference type="SIGNOR" id="Q96BD8"/>
<dbReference type="BioGRID-ORCS" id="220134">
    <property type="hits" value="480 hits in 1172 CRISPR screens"/>
</dbReference>
<dbReference type="ChiTaRS" id="SKA1">
    <property type="organism name" value="human"/>
</dbReference>
<dbReference type="EvolutionaryTrace" id="Q96BD8"/>
<dbReference type="GenomeRNAi" id="220134"/>
<dbReference type="Pharos" id="Q96BD8">
    <property type="development level" value="Tbio"/>
</dbReference>
<dbReference type="PRO" id="PR:Q96BD8"/>
<dbReference type="Proteomes" id="UP000005640">
    <property type="component" value="Chromosome 18"/>
</dbReference>
<dbReference type="RNAct" id="Q96BD8">
    <property type="molecule type" value="protein"/>
</dbReference>
<dbReference type="Bgee" id="ENSG00000154839">
    <property type="expression patterns" value="Expressed in primordial germ cell in gonad and 94 other cell types or tissues"/>
</dbReference>
<dbReference type="ExpressionAtlas" id="Q96BD8">
    <property type="expression patterns" value="baseline and differential"/>
</dbReference>
<dbReference type="GO" id="GO:0034451">
    <property type="term" value="C:centriolar satellite"/>
    <property type="evidence" value="ECO:0000314"/>
    <property type="project" value="HPA"/>
</dbReference>
<dbReference type="GO" id="GO:0005813">
    <property type="term" value="C:centrosome"/>
    <property type="evidence" value="ECO:0000314"/>
    <property type="project" value="UniProtKB"/>
</dbReference>
<dbReference type="GO" id="GO:0036064">
    <property type="term" value="C:ciliary basal body"/>
    <property type="evidence" value="ECO:0000314"/>
    <property type="project" value="HPA"/>
</dbReference>
<dbReference type="GO" id="GO:0005929">
    <property type="term" value="C:cilium"/>
    <property type="evidence" value="ECO:0000314"/>
    <property type="project" value="HPA"/>
</dbReference>
<dbReference type="GO" id="GO:0005829">
    <property type="term" value="C:cytosol"/>
    <property type="evidence" value="ECO:0000304"/>
    <property type="project" value="Reactome"/>
</dbReference>
<dbReference type="GO" id="GO:0045171">
    <property type="term" value="C:intercellular bridge"/>
    <property type="evidence" value="ECO:0000314"/>
    <property type="project" value="HPA"/>
</dbReference>
<dbReference type="GO" id="GO:0000776">
    <property type="term" value="C:kinetochore"/>
    <property type="evidence" value="ECO:0000314"/>
    <property type="project" value="UniProtKB"/>
</dbReference>
<dbReference type="GO" id="GO:0015630">
    <property type="term" value="C:microtubule cytoskeleton"/>
    <property type="evidence" value="ECO:0000314"/>
    <property type="project" value="HPA"/>
</dbReference>
<dbReference type="GO" id="GO:0072686">
    <property type="term" value="C:mitotic spindle"/>
    <property type="evidence" value="ECO:0000314"/>
    <property type="project" value="UniProtKB"/>
</dbReference>
<dbReference type="GO" id="GO:1990498">
    <property type="term" value="C:mitotic spindle microtubule"/>
    <property type="evidence" value="ECO:0000314"/>
    <property type="project" value="UniProtKB"/>
</dbReference>
<dbReference type="GO" id="GO:0005654">
    <property type="term" value="C:nucleoplasm"/>
    <property type="evidence" value="ECO:0000314"/>
    <property type="project" value="HPA"/>
</dbReference>
<dbReference type="GO" id="GO:0000940">
    <property type="term" value="C:outer kinetochore"/>
    <property type="evidence" value="ECO:0000314"/>
    <property type="project" value="UniProtKB"/>
</dbReference>
<dbReference type="GO" id="GO:0170027">
    <property type="term" value="C:SKA complex"/>
    <property type="evidence" value="ECO:0000314"/>
    <property type="project" value="UniProtKB"/>
</dbReference>
<dbReference type="GO" id="GO:0005876">
    <property type="term" value="C:spindle microtubule"/>
    <property type="evidence" value="ECO:0000314"/>
    <property type="project" value="UniProtKB"/>
</dbReference>
<dbReference type="GO" id="GO:0008017">
    <property type="term" value="F:microtubule binding"/>
    <property type="evidence" value="ECO:0000314"/>
    <property type="project" value="UniProtKB"/>
</dbReference>
<dbReference type="GO" id="GO:0051315">
    <property type="term" value="P:attachment of mitotic spindle microtubules to kinetochore"/>
    <property type="evidence" value="ECO:0000314"/>
    <property type="project" value="UniProtKB"/>
</dbReference>
<dbReference type="GO" id="GO:0051301">
    <property type="term" value="P:cell division"/>
    <property type="evidence" value="ECO:0007669"/>
    <property type="project" value="UniProtKB-KW"/>
</dbReference>
<dbReference type="GO" id="GO:0007059">
    <property type="term" value="P:chromosome segregation"/>
    <property type="evidence" value="ECO:0000318"/>
    <property type="project" value="GO_Central"/>
</dbReference>
<dbReference type="GO" id="GO:0051296">
    <property type="term" value="P:establishment of meiotic spindle orientation"/>
    <property type="evidence" value="ECO:0000250"/>
    <property type="project" value="UniProtKB"/>
</dbReference>
<dbReference type="GO" id="GO:0051310">
    <property type="term" value="P:metaphase chromosome alignment"/>
    <property type="evidence" value="ECO:0000315"/>
    <property type="project" value="UniProtKB"/>
</dbReference>
<dbReference type="GO" id="GO:0000278">
    <property type="term" value="P:mitotic cell cycle"/>
    <property type="evidence" value="ECO:0000315"/>
    <property type="project" value="UniProtKB"/>
</dbReference>
<dbReference type="GO" id="GO:0007080">
    <property type="term" value="P:mitotic metaphase chromosome alignment"/>
    <property type="evidence" value="ECO:0000315"/>
    <property type="project" value="UniProtKB"/>
</dbReference>
<dbReference type="GO" id="GO:0000070">
    <property type="term" value="P:mitotic sister chromatid segregation"/>
    <property type="evidence" value="ECO:0000315"/>
    <property type="project" value="UniProtKB"/>
</dbReference>
<dbReference type="GO" id="GO:0140499">
    <property type="term" value="P:negative regulation of mitotic spindle assembly checkpoint signaling"/>
    <property type="evidence" value="ECO:0000315"/>
    <property type="project" value="UniProtKB"/>
</dbReference>
<dbReference type="GO" id="GO:0031116">
    <property type="term" value="P:positive regulation of microtubule polymerization"/>
    <property type="evidence" value="ECO:0000314"/>
    <property type="project" value="UniProtKB"/>
</dbReference>
<dbReference type="GO" id="GO:0031110">
    <property type="term" value="P:regulation of microtubule polymerization or depolymerization"/>
    <property type="evidence" value="ECO:0000314"/>
    <property type="project" value="UniProtKB"/>
</dbReference>
<dbReference type="GO" id="GO:0007056">
    <property type="term" value="P:spindle assembly involved in female meiosis"/>
    <property type="evidence" value="ECO:0000250"/>
    <property type="project" value="UniProtKB"/>
</dbReference>
<dbReference type="CDD" id="cd12958">
    <property type="entry name" value="SKA1_N"/>
    <property type="match status" value="1"/>
</dbReference>
<dbReference type="FunFam" id="1.10.10.1890:FF:000001">
    <property type="entry name" value="Spindle and kinetochore-associated protein 1"/>
    <property type="match status" value="1"/>
</dbReference>
<dbReference type="Gene3D" id="6.10.250.1370">
    <property type="match status" value="1"/>
</dbReference>
<dbReference type="Gene3D" id="1.10.10.1890">
    <property type="entry name" value="Ska1 microtubule binding domain-like"/>
    <property type="match status" value="1"/>
</dbReference>
<dbReference type="InterPro" id="IPR009829">
    <property type="entry name" value="SKA1"/>
</dbReference>
<dbReference type="InterPro" id="IPR042031">
    <property type="entry name" value="SKA1_MBD_sf"/>
</dbReference>
<dbReference type="PANTHER" id="PTHR28573">
    <property type="entry name" value="SPINDLE AND KINETOCHORE-ASSOCIATED PROTEIN 1"/>
    <property type="match status" value="1"/>
</dbReference>
<dbReference type="PANTHER" id="PTHR28573:SF1">
    <property type="entry name" value="SPINDLE AND KINETOCHORE-ASSOCIATED PROTEIN 1"/>
    <property type="match status" value="1"/>
</dbReference>
<dbReference type="Pfam" id="PF07160">
    <property type="entry name" value="SKA1"/>
    <property type="match status" value="1"/>
</dbReference>
<reference key="1">
    <citation type="journal article" date="2004" name="Nat. Genet.">
        <title>Complete sequencing and characterization of 21,243 full-length human cDNAs.</title>
        <authorList>
            <person name="Ota T."/>
            <person name="Suzuki Y."/>
            <person name="Nishikawa T."/>
            <person name="Otsuki T."/>
            <person name="Sugiyama T."/>
            <person name="Irie R."/>
            <person name="Wakamatsu A."/>
            <person name="Hayashi K."/>
            <person name="Sato H."/>
            <person name="Nagai K."/>
            <person name="Kimura K."/>
            <person name="Makita H."/>
            <person name="Sekine M."/>
            <person name="Obayashi M."/>
            <person name="Nishi T."/>
            <person name="Shibahara T."/>
            <person name="Tanaka T."/>
            <person name="Ishii S."/>
            <person name="Yamamoto J."/>
            <person name="Saito K."/>
            <person name="Kawai Y."/>
            <person name="Isono Y."/>
            <person name="Nakamura Y."/>
            <person name="Nagahari K."/>
            <person name="Murakami K."/>
            <person name="Yasuda T."/>
            <person name="Iwayanagi T."/>
            <person name="Wagatsuma M."/>
            <person name="Shiratori A."/>
            <person name="Sudo H."/>
            <person name="Hosoiri T."/>
            <person name="Kaku Y."/>
            <person name="Kodaira H."/>
            <person name="Kondo H."/>
            <person name="Sugawara M."/>
            <person name="Takahashi M."/>
            <person name="Kanda K."/>
            <person name="Yokoi T."/>
            <person name="Furuya T."/>
            <person name="Kikkawa E."/>
            <person name="Omura Y."/>
            <person name="Abe K."/>
            <person name="Kamihara K."/>
            <person name="Katsuta N."/>
            <person name="Sato K."/>
            <person name="Tanikawa M."/>
            <person name="Yamazaki M."/>
            <person name="Ninomiya K."/>
            <person name="Ishibashi T."/>
            <person name="Yamashita H."/>
            <person name="Murakawa K."/>
            <person name="Fujimori K."/>
            <person name="Tanai H."/>
            <person name="Kimata M."/>
            <person name="Watanabe M."/>
            <person name="Hiraoka S."/>
            <person name="Chiba Y."/>
            <person name="Ishida S."/>
            <person name="Ono Y."/>
            <person name="Takiguchi S."/>
            <person name="Watanabe S."/>
            <person name="Yosida M."/>
            <person name="Hotuta T."/>
            <person name="Kusano J."/>
            <person name="Kanehori K."/>
            <person name="Takahashi-Fujii A."/>
            <person name="Hara H."/>
            <person name="Tanase T.-O."/>
            <person name="Nomura Y."/>
            <person name="Togiya S."/>
            <person name="Komai F."/>
            <person name="Hara R."/>
            <person name="Takeuchi K."/>
            <person name="Arita M."/>
            <person name="Imose N."/>
            <person name="Musashino K."/>
            <person name="Yuuki H."/>
            <person name="Oshima A."/>
            <person name="Sasaki N."/>
            <person name="Aotsuka S."/>
            <person name="Yoshikawa Y."/>
            <person name="Matsunawa H."/>
            <person name="Ichihara T."/>
            <person name="Shiohata N."/>
            <person name="Sano S."/>
            <person name="Moriya S."/>
            <person name="Momiyama H."/>
            <person name="Satoh N."/>
            <person name="Takami S."/>
            <person name="Terashima Y."/>
            <person name="Suzuki O."/>
            <person name="Nakagawa S."/>
            <person name="Senoh A."/>
            <person name="Mizoguchi H."/>
            <person name="Goto Y."/>
            <person name="Shimizu F."/>
            <person name="Wakebe H."/>
            <person name="Hishigaki H."/>
            <person name="Watanabe T."/>
            <person name="Sugiyama A."/>
            <person name="Takemoto M."/>
            <person name="Kawakami B."/>
            <person name="Yamazaki M."/>
            <person name="Watanabe K."/>
            <person name="Kumagai A."/>
            <person name="Itakura S."/>
            <person name="Fukuzumi Y."/>
            <person name="Fujimori Y."/>
            <person name="Komiyama M."/>
            <person name="Tashiro H."/>
            <person name="Tanigami A."/>
            <person name="Fujiwara T."/>
            <person name="Ono T."/>
            <person name="Yamada K."/>
            <person name="Fujii Y."/>
            <person name="Ozaki K."/>
            <person name="Hirao M."/>
            <person name="Ohmori Y."/>
            <person name="Kawabata A."/>
            <person name="Hikiji T."/>
            <person name="Kobatake N."/>
            <person name="Inagaki H."/>
            <person name="Ikema Y."/>
            <person name="Okamoto S."/>
            <person name="Okitani R."/>
            <person name="Kawakami T."/>
            <person name="Noguchi S."/>
            <person name="Itoh T."/>
            <person name="Shigeta K."/>
            <person name="Senba T."/>
            <person name="Matsumura K."/>
            <person name="Nakajima Y."/>
            <person name="Mizuno T."/>
            <person name="Morinaga M."/>
            <person name="Sasaki M."/>
            <person name="Togashi T."/>
            <person name="Oyama M."/>
            <person name="Hata H."/>
            <person name="Watanabe M."/>
            <person name="Komatsu T."/>
            <person name="Mizushima-Sugano J."/>
            <person name="Satoh T."/>
            <person name="Shirai Y."/>
            <person name="Takahashi Y."/>
            <person name="Nakagawa K."/>
            <person name="Okumura K."/>
            <person name="Nagase T."/>
            <person name="Nomura N."/>
            <person name="Kikuchi H."/>
            <person name="Masuho Y."/>
            <person name="Yamashita R."/>
            <person name="Nakai K."/>
            <person name="Yada T."/>
            <person name="Nakamura Y."/>
            <person name="Ohara O."/>
            <person name="Isogai T."/>
            <person name="Sugano S."/>
        </authorList>
    </citation>
    <scope>NUCLEOTIDE SEQUENCE [LARGE SCALE MRNA] (ISOFORMS 1 AND 2)</scope>
    <scope>VARIANT ILE-91</scope>
    <source>
        <tissue>Thymus</tissue>
    </source>
</reference>
<reference key="2">
    <citation type="submission" date="2005-07" db="EMBL/GenBank/DDBJ databases">
        <authorList>
            <person name="Mural R.J."/>
            <person name="Istrail S."/>
            <person name="Sutton G.G."/>
            <person name="Florea L."/>
            <person name="Halpern A.L."/>
            <person name="Mobarry C.M."/>
            <person name="Lippert R."/>
            <person name="Walenz B."/>
            <person name="Shatkay H."/>
            <person name="Dew I."/>
            <person name="Miller J.R."/>
            <person name="Flanigan M.J."/>
            <person name="Edwards N.J."/>
            <person name="Bolanos R."/>
            <person name="Fasulo D."/>
            <person name="Halldorsson B.V."/>
            <person name="Hannenhalli S."/>
            <person name="Turner R."/>
            <person name="Yooseph S."/>
            <person name="Lu F."/>
            <person name="Nusskern D.R."/>
            <person name="Shue B.C."/>
            <person name="Zheng X.H."/>
            <person name="Zhong F."/>
            <person name="Delcher A.L."/>
            <person name="Huson D.H."/>
            <person name="Kravitz S.A."/>
            <person name="Mouchard L."/>
            <person name="Reinert K."/>
            <person name="Remington K.A."/>
            <person name="Clark A.G."/>
            <person name="Waterman M.S."/>
            <person name="Eichler E.E."/>
            <person name="Adams M.D."/>
            <person name="Hunkapiller M.W."/>
            <person name="Myers E.W."/>
            <person name="Venter J.C."/>
        </authorList>
    </citation>
    <scope>NUCLEOTIDE SEQUENCE [LARGE SCALE GENOMIC DNA]</scope>
</reference>
<reference key="3">
    <citation type="journal article" date="2004" name="Genome Res.">
        <title>The status, quality, and expansion of the NIH full-length cDNA project: the Mammalian Gene Collection (MGC).</title>
        <authorList>
            <consortium name="The MGC Project Team"/>
        </authorList>
    </citation>
    <scope>NUCLEOTIDE SEQUENCE [LARGE SCALE MRNA] (ISOFORM 1)</scope>
    <source>
        <tissue>Uterus</tissue>
    </source>
</reference>
<reference key="4">
    <citation type="journal article" date="2005" name="Mol. Cell. Proteomics">
        <title>Proteome analysis of the human mitotic spindle.</title>
        <authorList>
            <person name="Sauer G."/>
            <person name="Koerner R."/>
            <person name="Hanisch A."/>
            <person name="Ries A."/>
            <person name="Nigg E.A."/>
            <person name="Sillje H.H.W."/>
        </authorList>
    </citation>
    <scope>SUBCELLULAR LOCATION</scope>
    <scope>IDENTIFICATION BY MASS SPECTROMETRY</scope>
</reference>
<reference key="5">
    <citation type="journal article" date="2006" name="EMBO J.">
        <title>Timely anaphase onset requires a novel spindle and kinetochore complex comprising Ska1 and Ska2.</title>
        <authorList>
            <person name="Hanisch A."/>
            <person name="Sillje H.H.W."/>
            <person name="Nigg E.A."/>
        </authorList>
    </citation>
    <scope>FUNCTION</scope>
    <scope>SUBCELLULAR LOCATION</scope>
    <scope>INTERACTION WITH SKA2</scope>
</reference>
<reference key="6">
    <citation type="journal article" date="2009" name="Anal. Chem.">
        <title>Lys-N and trypsin cover complementary parts of the phosphoproteome in a refined SCX-based approach.</title>
        <authorList>
            <person name="Gauci S."/>
            <person name="Helbig A.O."/>
            <person name="Slijper M."/>
            <person name="Krijgsveld J."/>
            <person name="Heck A.J."/>
            <person name="Mohammed S."/>
        </authorList>
    </citation>
    <scope>ACETYLATION [LARGE SCALE ANALYSIS] AT ALA-2</scope>
    <scope>CLEAVAGE OF INITIATOR METHIONINE [LARGE SCALE ANALYSIS]</scope>
    <scope>IDENTIFICATION BY MASS SPECTROMETRY [LARGE SCALE ANALYSIS]</scope>
</reference>
<reference key="7">
    <citation type="journal article" date="2009" name="Curr. Biol.">
        <title>Ska3 is required for spindle checkpoint silencing and the maintenance of chromosome cohesion in mitosis.</title>
        <authorList>
            <person name="Daum J.R."/>
            <person name="Wren J.D."/>
            <person name="Daniel J.J."/>
            <person name="Sivakumar S."/>
            <person name="McAvoy J.N."/>
            <person name="Potapova T.A."/>
            <person name="Gorbsky G.J."/>
        </authorList>
    </citation>
    <scope>SUBCELLULAR LOCATION</scope>
</reference>
<reference key="8">
    <citation type="journal article" date="2009" name="Dev. Cell">
        <title>The human kinetochore Ska1 complex facilitates microtubule depolymerization-coupled motility.</title>
        <authorList>
            <person name="Welburn J.P.I."/>
            <person name="Grishchuk E.L."/>
            <person name="Backer C.B."/>
            <person name="Wilson-Kubalek E.M."/>
            <person name="Yates J.R. III"/>
            <person name="Cheeseman I.M."/>
        </authorList>
    </citation>
    <scope>FUNCTION</scope>
    <scope>SUBCELLULAR LOCATION</scope>
    <scope>IDENTIFICATION IN THE SKA COMPLEX</scope>
    <scope>INTERACTION WITH SKA2 AND SKA3</scope>
</reference>
<reference key="9">
    <citation type="journal article" date="2009" name="EMBO J.">
        <title>Comparative profiling identifies C13orf3 as a component of the Ska complex required for mammalian cell division.</title>
        <authorList>
            <person name="Theis M."/>
            <person name="Slabicki M."/>
            <person name="Junqueira M."/>
            <person name="Paszkowski-Rogacz M."/>
            <person name="Sontheimer J."/>
            <person name="Kittler R."/>
            <person name="Heninger A.K."/>
            <person name="Glatter T."/>
            <person name="Kruusmaa K."/>
            <person name="Poser I."/>
            <person name="Hyman A.A."/>
            <person name="Pisabarro M.T."/>
            <person name="Gstaiger M."/>
            <person name="Aebersold R."/>
            <person name="Shevchenko A."/>
            <person name="Buchholz F."/>
        </authorList>
    </citation>
    <scope>IDENTIFICATION IN THE SKA COMPLEX</scope>
    <scope>IDENTIFICATION BY MASS SPECTROMETRY</scope>
</reference>
<reference key="10">
    <citation type="journal article" date="2011" name="BMC Syst. Biol.">
        <title>Initial characterization of the human central proteome.</title>
        <authorList>
            <person name="Burkard T.R."/>
            <person name="Planyavsky M."/>
            <person name="Kaupe I."/>
            <person name="Breitwieser F.P."/>
            <person name="Buerckstuemmer T."/>
            <person name="Bennett K.L."/>
            <person name="Superti-Furga G."/>
            <person name="Colinge J."/>
        </authorList>
    </citation>
    <scope>IDENTIFICATION BY MASS SPECTROMETRY [LARGE SCALE ANALYSIS]</scope>
</reference>
<reference key="11">
    <citation type="journal article" date="2012" name="Dev. Cell">
        <title>The kinetochore-bound Ska1 complex tracks depolymerizing microtubules and binds to curved protofilaments.</title>
        <authorList>
            <person name="Schmidt J.C."/>
            <person name="Arthanari H."/>
            <person name="Boeszoermenyi A."/>
            <person name="Dashkevich N.M."/>
            <person name="Wilson-Kubalek E.M."/>
            <person name="Monnier N."/>
            <person name="Markus M."/>
            <person name="Oberer M."/>
            <person name="Milligan R.A."/>
            <person name="Bathe M."/>
            <person name="Wagner G."/>
            <person name="Grishchuk E.L."/>
            <person name="Cheeseman I.M."/>
        </authorList>
    </citation>
    <scope>FUNCTION</scope>
    <scope>INTERACTION WITH SKA3</scope>
    <scope>MUTAGENESIS OF ARG-155; SER-185; ARG-236; SER-242 AND ARG-245</scope>
</reference>
<reference key="12">
    <citation type="journal article" date="2012" name="J. Cell Biol.">
        <title>Aurora B controls kinetochore-microtubule attachments by inhibiting Ska complex-KMN network interaction.</title>
        <authorList>
            <person name="Chan Y.W."/>
            <person name="Jeyaprakash A.A."/>
            <person name="Nigg E.A."/>
            <person name="Santamaria A."/>
        </authorList>
    </citation>
    <scope>FUNCTION</scope>
    <scope>INTERACTION WITH THE NDC80 COMPLEX</scope>
    <scope>SUBCELLULAR LOCATION</scope>
    <scope>PHOSPHORYLATION AT THR-157 AND SER-242</scope>
</reference>
<reference key="13">
    <citation type="journal article" date="2012" name="J. Cell Sci.">
        <title>The Ndc80 internal loop is required for recruitment of the Ska complex to establish end-on microtubule attachment to kinetochores.</title>
        <authorList>
            <person name="Zhang G."/>
            <person name="Kelstrup C.D."/>
            <person name="Hu X.W."/>
            <person name="Kaas Hansen M.J."/>
            <person name="Singleton M.R."/>
            <person name="Olsen J.V."/>
            <person name="Nilsson J."/>
        </authorList>
    </citation>
    <scope>FUNCTION</scope>
    <scope>INTERACTION WITH NDC80</scope>
</reference>
<reference key="14">
    <citation type="journal article" date="2016" name="Elife">
        <title>The human SKA complex drives the metaphase-anaphase cell cycle transition by recruiting protein phosphatase 1 to kinetochores.</title>
        <authorList>
            <person name="Sivakumar S."/>
            <person name="Janczyk P.L."/>
            <person name="Qu Q."/>
            <person name="Brautigam C.A."/>
            <person name="Stukenberg P.T."/>
            <person name="Yu H."/>
            <person name="Gorbsky G.J."/>
        </authorList>
    </citation>
    <scope>FUNCTION</scope>
    <scope>INTERACTION WITH PPP1CA</scope>
</reference>
<reference key="15">
    <citation type="journal article" date="2016" name="J. Cell Biol.">
        <title>The Ska complex promotes Aurora B activity to ensure chromosome biorientation.</title>
        <authorList>
            <person name="Redli P.M."/>
            <person name="Gasic I."/>
            <person name="Meraldi P."/>
            <person name="Nigg E.A."/>
            <person name="Santamaria A."/>
        </authorList>
    </citation>
    <scope>FUNCTION</scope>
    <scope>SUBCELLULAR LOCATION</scope>
</reference>
<reference key="16">
    <citation type="journal article" date="2016" name="Nat. Commun.">
        <title>EB1 regulates attachment of Ska1 with microtubules by forming extended structures on the microtubule lattice.</title>
        <authorList>
            <person name="Thomas G.E."/>
            <person name="Bandopadhyay K."/>
            <person name="Sutradhar S."/>
            <person name="Renjith M.R."/>
            <person name="Singh P."/>
            <person name="Gireesh K.K."/>
            <person name="Simon S."/>
            <person name="Badarudeen B."/>
            <person name="Gupta H."/>
            <person name="Banerjee M."/>
            <person name="Paul R."/>
            <person name="Mitra J."/>
            <person name="Manna T.K."/>
        </authorList>
    </citation>
    <scope>FUNCTION</scope>
    <scope>SUBUNIT</scope>
    <scope>INTERACTION WITH MAPRE1 AND NDC80</scope>
    <scope>SUBCELLULAR LOCATION</scope>
</reference>
<reference key="17">
    <citation type="journal article" date="2016" name="Sci. Rep.">
        <title>Ska3 Ensures Timely Mitotic Progression by Interacting Directly With Microtubules and Ska1 Microtubule Binding Domain.</title>
        <authorList>
            <person name="Abad M.A."/>
            <person name="Zou J."/>
            <person name="Medina-Pritchard B."/>
            <person name="Nigg E.A."/>
            <person name="Rappsilber J."/>
            <person name="Santamaria A."/>
            <person name="Jeyaprakash A.A."/>
        </authorList>
    </citation>
    <scope>FUNCTION</scope>
</reference>
<reference key="18">
    <citation type="journal article" date="2017" name="Curr. Biol.">
        <title>Ska3 Phosphorylated by Cdk1 Binds Ndc80 and Recruits Ska to Kinetochores to Promote Mitotic Progression.</title>
        <authorList>
            <person name="Zhang Q."/>
            <person name="Sivakumar S."/>
            <person name="Chen Y."/>
            <person name="Gao H."/>
            <person name="Yang L."/>
            <person name="Yuan Z."/>
            <person name="Yu H."/>
            <person name="Liu H."/>
        </authorList>
    </citation>
    <scope>SUBCELLULAR LOCATION</scope>
</reference>
<reference key="19">
    <citation type="journal article" date="2017" name="Curr. Biol.">
        <title>Microtubule Tip Tracking by the Spindle and Kinetochore Protein Ska1 Requires Diverse Tubulin-Interacting Surfaces.</title>
        <authorList>
            <person name="Monda J.K."/>
            <person name="Whitney I.P."/>
            <person name="Tarasovetc E.V."/>
            <person name="Wilson-Kubalek E."/>
            <person name="Milligan R.A."/>
            <person name="Grishchuk E.L."/>
            <person name="Cheeseman I.M."/>
        </authorList>
    </citation>
    <scope>FUNCTION</scope>
</reference>
<reference key="20">
    <citation type="journal article" date="2017" name="Dev. Cell">
        <title>Mps1 Regulates Kinetochore-Microtubule Attachment Stability via the Ska Complex to Ensure Error-Free Chromosome Segregation.</title>
        <authorList>
            <person name="Maciejowski J."/>
            <person name="Drechsler H."/>
            <person name="Grundner-Culemann K."/>
            <person name="Ballister E.R."/>
            <person name="Rodriguez-Rodriguez J.A."/>
            <person name="Rodriguez-Bravo V."/>
            <person name="Jones M.J.K."/>
            <person name="Foley E."/>
            <person name="Lampson M.A."/>
            <person name="Daub H."/>
            <person name="McAinsh A.D."/>
            <person name="Jallepalli P.V."/>
        </authorList>
    </citation>
    <scope>IDENTIFICATION IN THE SKA COMPLEX</scope>
</reference>
<reference key="21">
    <citation type="journal article" date="2017" name="Dev. Cell">
        <title>Mechanism of Ska Recruitment by Ndc80 Complexes to Kinetochores.</title>
        <authorList>
            <person name="Janczyk P.L."/>
            <person name="Skorupka K.A."/>
            <person name="Tooley J.G."/>
            <person name="Matson D.R."/>
            <person name="Kestner C.A."/>
            <person name="West T."/>
            <person name="Pornillos O."/>
            <person name="Stukenberg P.T."/>
        </authorList>
    </citation>
    <scope>IDENTIFICATION IN THE SKA COMPLEX</scope>
    <scope>INTERACTION WITH THE NDC80 COMPLEX</scope>
</reference>
<reference key="22">
    <citation type="journal article" date="2017" name="J. Cell Biol.">
        <title>Congressing kinetochores progressively load Ska complexes to prevent force-dependent detachment.</title>
        <authorList>
            <person name="Auckland P."/>
            <person name="Clarke N.I."/>
            <person name="Royle S.J."/>
            <person name="McAinsh A.D."/>
        </authorList>
    </citation>
    <scope>FUNCTION</scope>
</reference>
<reference key="23">
    <citation type="journal article" date="2018" name="Proc. Natl. Acad. Sci. U.S.A.">
        <title>Human Ska complex and Ndc80 complex interact to form a load-bearing assembly that strengthens kinetochore-microtubule attachments.</title>
        <authorList>
            <person name="Helgeson L.A."/>
            <person name="Zelter A."/>
            <person name="Riffle M."/>
            <person name="MacCoss M.J."/>
            <person name="Asbury C.L."/>
            <person name="Davis T.N."/>
        </authorList>
    </citation>
    <scope>FUNCTION</scope>
    <scope>SUBUNIT</scope>
    <scope>IDENTIFICATION IN THE SKA COMPLEX</scope>
    <scope>SUBCELLULAR LOCATION</scope>
</reference>
<reference key="24">
    <citation type="journal article" date="2019" name="Elife">
        <title>Molecular determinants of the Ska-Ndc80 interaction and their influence on microtubule tracking and force-coupling.</title>
        <authorList>
            <person name="Huis In 't Veld P.J."/>
            <person name="Volkov V.A."/>
            <person name="Stender I.D."/>
            <person name="Musacchio A."/>
            <person name="Dogterom M."/>
        </authorList>
    </citation>
    <scope>FUNCTION</scope>
    <scope>SUBUNIT</scope>
    <scope>IDENTIFICATION IN THE SKA COMPLEX</scope>
</reference>
<reference key="25">
    <citation type="journal article" date="2020" name="Mol. Biol. Cell">
        <title>Multisite phosphorylation determines the formation of Ska-Ndc80 macro-complexes that are essential for chromosome segregation during mitosis.</title>
        <authorList>
            <person name="Zhang Q."/>
            <person name="Hu L."/>
            <person name="Chen Y."/>
            <person name="Tian W."/>
            <person name="Liu H."/>
        </authorList>
    </citation>
    <scope>IDENTIFICATION IN THE SKA COMPLEX</scope>
    <scope>INTERACTION WITH THE NDC80 COMPLEX</scope>
</reference>
<reference key="26">
    <citation type="journal article" date="2023" name="J. Biol. Chem.">
        <title>Kinetochore-microtubule attachment in human cells is regulated by the interaction of a conserved motif of Ska1 with EB1.</title>
        <authorList>
            <person name="Radhakrishnan R.M."/>
            <person name="Kizhakkeduth S.T."/>
            <person name="Nair V.M."/>
            <person name="Ayyappan S."/>
            <person name="Lakshmi R.B."/>
            <person name="Babu N."/>
            <person name="Prasannajith A."/>
            <person name="Umeda K."/>
            <person name="Vijayan V."/>
            <person name="Kodera N."/>
            <person name="Manna T.K."/>
        </authorList>
    </citation>
    <scope>FUNCTION</scope>
    <scope>INTERACTION WITH MAPRE1</scope>
    <scope>MUTAGENESIS OF 95-LEU-PRO-96</scope>
</reference>
<reference evidence="31" key="27">
    <citation type="journal article" date="2012" name="Mol. Cell">
        <title>Structural and functional organization of the Ska complex, a key component of the kinetochore-microtubule interface.</title>
        <authorList>
            <person name="Jeyaprakash A.A."/>
            <person name="Santamaria A."/>
            <person name="Jayachandran U."/>
            <person name="Chan Y.W."/>
            <person name="Benda C."/>
            <person name="Nigg E.A."/>
            <person name="Conti E."/>
        </authorList>
    </citation>
    <scope>X-RAY CRYSTALLOGRAPHY (3.32 ANGSTROMS) OF 1-91</scope>
    <scope>FUNCTION</scope>
    <scope>IDENTIFICATION IN THE SKA COMPLEX</scope>
    <scope>SUBCELLULAR LOCATION</scope>
</reference>
<reference evidence="32 33" key="28">
    <citation type="journal article" date="2014" name="Nat. Commun.">
        <title>Structural basis for microtubule recognition by the human kinetochore Ska complex.</title>
        <authorList>
            <person name="Abad M.A."/>
            <person name="Medina B."/>
            <person name="Santamaria A."/>
            <person name="Zou J."/>
            <person name="Plasberg-Hill C."/>
            <person name="Madhumalar A."/>
            <person name="Jayachandran U."/>
            <person name="Redli P.M."/>
            <person name="Rappsilber J."/>
            <person name="Nigg E.A."/>
            <person name="Jeyaprakash A.A."/>
        </authorList>
    </citation>
    <scope>X-RAY CRYSTALLOGRAPHY (2.01 ANGSTROMS) OF 133-255</scope>
    <scope>FUNCTION</scope>
    <scope>SUBCELLULAR LOCATION</scope>
    <scope>MUTAGENESIS OF ARG-155; 183-LYS-LYS-184; SER-185; 203-LYS--LYS-206; THR-205; LYS-217; 223-LYS--LYS-227; ARG-236 AND ARG-245</scope>
</reference>
<sequence length="255" mass="29484">MASSDLEQLCSHVNEKIGNIKKTLSLRNCGQEPTLKTVLNKIGDEIIVINELLNKLELEIQYQEQTNNSLKELCESLEEDYKDIEHLKENVPSHLPQVTVTQSCVKGSDLDPEEPIKVEEPEPVKKPPKEQRSIKEMPFITCDEFNGVPSYMKSRLTYNQINDVIKEINKAVISKYKILHQPKKSMNSVTRNLYHRFIDEETKDTKGRYFIVEADIKEFTTLKADKKFHVLLNILRHCRRLSEVRGGGLTRYVIT</sequence>
<accession>Q96BD8</accession>
<accession>B2R9Y6</accession>
<accession>B4E0P4</accession>
<feature type="initiator methionine" description="Removed" evidence="34">
    <location>
        <position position="1"/>
    </location>
</feature>
<feature type="chain" id="PRO_0000273155" description="SKA complex subunit 1">
    <location>
        <begin position="2"/>
        <end position="255"/>
    </location>
</feature>
<feature type="region of interest" description="Flexiple loop that anchors MAPRE1" evidence="14 27">
    <location>
        <begin position="92"/>
        <end position="132"/>
    </location>
</feature>
<feature type="region of interest" description="Disordered" evidence="3">
    <location>
        <begin position="106"/>
        <end position="131"/>
    </location>
</feature>
<feature type="region of interest" description="Binds microtubules and protein phosphatase PP1 subunit PPP1CA" evidence="12 13 14 15 17 23 24">
    <location>
        <begin position="132"/>
        <end position="255"/>
    </location>
</feature>
<feature type="coiled-coil region" evidence="2">
    <location>
        <begin position="49"/>
        <end position="91"/>
    </location>
</feature>
<feature type="short sequence motif" description="SXLP motif; mediates interaction with MAPRE1, targeting to microtubule plus ends, stabilization on kinetochores and is required for proper chromosome alignment to the metaphase plate" evidence="27">
    <location>
        <begin position="93"/>
        <end position="96"/>
    </location>
</feature>
<feature type="compositionally biased region" description="Basic and acidic residues" evidence="3">
    <location>
        <begin position="114"/>
        <end position="131"/>
    </location>
</feature>
<feature type="modified residue" description="N-acetylalanine" evidence="34">
    <location>
        <position position="2"/>
    </location>
</feature>
<feature type="modified residue" description="Phosphothreonine; by AURKB" evidence="10">
    <location>
        <position position="157"/>
    </location>
</feature>
<feature type="modified residue" description="Phosphoserine; by AURKB" evidence="10">
    <location>
        <position position="242"/>
    </location>
</feature>
<feature type="splice variant" id="VSP_037250" description="In isoform 2." evidence="28">
    <original>CVKGSDLDPEEPIKVEEPEPVKKPPKEQRSIKEMPFITCDEFNGVPS</original>
    <variation>W</variation>
    <location>
        <begin position="104"/>
        <end position="150"/>
    </location>
</feature>
<feature type="sequence variant" id="VAR_030091" description="In dbSNP:rs6507992." evidence="4">
    <original>V</original>
    <variation>I</variation>
    <location>
        <position position="91"/>
    </location>
</feature>
<feature type="mutagenesis site" description="Abolishes binding to MAPRE1." evidence="27">
    <original>LP</original>
    <variation>NN</variation>
    <location>
        <begin position="95"/>
        <end position="96"/>
    </location>
</feature>
<feature type="mutagenesis site" description="Decreases microtubule binding; when associated with A-236 and A-245." evidence="13 14">
    <original>R</original>
    <variation>A</variation>
    <location>
        <position position="155"/>
    </location>
</feature>
<feature type="mutagenesis site" description="Decreases microtubule binding; when associated with 203-A--A-206." evidence="14">
    <original>KK</original>
    <variation>AA</variation>
    <location>
        <begin position="183"/>
        <end position="184"/>
    </location>
</feature>
<feature type="mutagenesis site" description="Phosphomimetic mutant which strongly reduces microtubule binding; when associated with D-205 or D-242." evidence="13 14">
    <original>S</original>
    <variation>D</variation>
    <location>
        <position position="185"/>
    </location>
</feature>
<feature type="mutagenesis site" description="Decreases microtubule binding; when associated with 183-A--A-184." evidence="14">
    <original>KDTK</original>
    <variation>ADTA</variation>
    <location>
        <begin position="203"/>
        <end position="206"/>
    </location>
</feature>
<feature type="mutagenesis site" description="Phosphomimetic mutant which strongly reduces microtubule binding; when associated with D-185." evidence="14">
    <original>T</original>
    <variation>D</variation>
    <location>
        <position position="205"/>
    </location>
</feature>
<feature type="mutagenesis site" description="Decreases microtubule binding; when associated with 223-A--A-227." evidence="14">
    <original>K</original>
    <variation>A</variation>
    <location>
        <position position="217"/>
    </location>
</feature>
<feature type="mutagenesis site" description="Decreases microtubule binding; when associated with A-217." evidence="14">
    <original>KADKK</original>
    <variation>AADAA</variation>
    <location>
        <begin position="223"/>
        <end position="227"/>
    </location>
</feature>
<feature type="mutagenesis site" description="Decreases microtubule binding; when associated with A-155 and A-245." evidence="13 14">
    <original>R</original>
    <variation>A</variation>
    <location>
        <position position="236"/>
    </location>
</feature>
<feature type="mutagenesis site" description="Phosphomimetic mutant which strongly reduces microtubule binding; when associated with D-185." evidence="13">
    <original>S</original>
    <variation>D</variation>
    <location>
        <position position="242"/>
    </location>
</feature>
<feature type="mutagenesis site" description="Decreases microtubule binding; when associated with A-155 and A-236." evidence="13 14">
    <original>R</original>
    <variation>A</variation>
    <location>
        <position position="245"/>
    </location>
</feature>
<feature type="helix" evidence="35">
    <location>
        <begin position="5"/>
        <end position="31"/>
    </location>
</feature>
<feature type="helix" evidence="35">
    <location>
        <begin position="33"/>
        <end position="79"/>
    </location>
</feature>
<feature type="helix" evidence="35">
    <location>
        <begin position="82"/>
        <end position="88"/>
    </location>
</feature>
<feature type="helix" evidence="36">
    <location>
        <begin position="142"/>
        <end position="146"/>
    </location>
</feature>
<feature type="helix" evidence="36">
    <location>
        <begin position="150"/>
        <end position="153"/>
    </location>
</feature>
<feature type="helix" evidence="36">
    <location>
        <begin position="158"/>
        <end position="179"/>
    </location>
</feature>
<feature type="helix" evidence="36">
    <location>
        <begin position="183"/>
        <end position="185"/>
    </location>
</feature>
<feature type="helix" evidence="36">
    <location>
        <begin position="188"/>
        <end position="200"/>
    </location>
</feature>
<feature type="turn" evidence="36">
    <location>
        <begin position="203"/>
        <end position="207"/>
    </location>
</feature>
<feature type="strand" evidence="37">
    <location>
        <begin position="210"/>
        <end position="212"/>
    </location>
</feature>
<feature type="helix" evidence="36">
    <location>
        <begin position="213"/>
        <end position="219"/>
    </location>
</feature>
<feature type="helix" evidence="36">
    <location>
        <begin position="226"/>
        <end position="237"/>
    </location>
</feature>
<feature type="strand" evidence="36">
    <location>
        <begin position="240"/>
        <end position="244"/>
    </location>
</feature>
<feature type="strand" evidence="36">
    <location>
        <begin position="251"/>
        <end position="254"/>
    </location>
</feature>
<protein>
    <recommendedName>
        <fullName evidence="29">SKA complex subunit 1</fullName>
    </recommendedName>
    <alternativeName>
        <fullName>Spindle and kinetochore-associated protein 1</fullName>
    </alternativeName>
</protein>